<keyword id="KW-0175">Coiled coil</keyword>
<keyword id="KW-1185">Reference proteome</keyword>
<feature type="chain" id="PRO_0000331228" description="Lebercilin-like protein">
    <location>
        <begin position="1"/>
        <end position="668"/>
    </location>
</feature>
<feature type="region of interest" description="Disordered" evidence="3">
    <location>
        <begin position="17"/>
        <end position="44"/>
    </location>
</feature>
<feature type="region of interest" description="Disordered" evidence="3">
    <location>
        <begin position="351"/>
        <end position="402"/>
    </location>
</feature>
<feature type="region of interest" description="Disordered" evidence="3">
    <location>
        <begin position="495"/>
        <end position="520"/>
    </location>
</feature>
<feature type="region of interest" description="Disordered" evidence="3">
    <location>
        <begin position="533"/>
        <end position="581"/>
    </location>
</feature>
<feature type="region of interest" description="Disordered" evidence="3">
    <location>
        <begin position="605"/>
        <end position="668"/>
    </location>
</feature>
<feature type="coiled-coil region" evidence="2">
    <location>
        <begin position="148"/>
        <end position="259"/>
    </location>
</feature>
<feature type="coiled-coil region" evidence="2">
    <location>
        <begin position="305"/>
        <end position="336"/>
    </location>
</feature>
<feature type="coiled-coil region" evidence="2">
    <location>
        <begin position="420"/>
        <end position="440"/>
    </location>
</feature>
<feature type="compositionally biased region" description="Basic and acidic residues" evidence="3">
    <location>
        <begin position="22"/>
        <end position="31"/>
    </location>
</feature>
<feature type="compositionally biased region" description="Polar residues" evidence="3">
    <location>
        <begin position="368"/>
        <end position="380"/>
    </location>
</feature>
<feature type="compositionally biased region" description="Polar residues" evidence="3">
    <location>
        <begin position="546"/>
        <end position="558"/>
    </location>
</feature>
<feature type="compositionally biased region" description="Basic and acidic residues" evidence="3">
    <location>
        <begin position="560"/>
        <end position="572"/>
    </location>
</feature>
<feature type="compositionally biased region" description="Basic and acidic residues" evidence="3">
    <location>
        <begin position="621"/>
        <end position="632"/>
    </location>
</feature>
<feature type="compositionally biased region" description="Polar residues" evidence="3">
    <location>
        <begin position="633"/>
        <end position="660"/>
    </location>
</feature>
<feature type="sequence conflict" description="In Ref. 1; BAE01441." evidence="4" ref="1">
    <original>V</original>
    <variation>A</variation>
    <location>
        <position position="291"/>
    </location>
</feature>
<feature type="sequence conflict" description="In Ref. 1; BAE01441." evidence="4" ref="1">
    <original>H</original>
    <variation>R</variation>
    <location>
        <position position="398"/>
    </location>
</feature>
<feature type="sequence conflict" description="In Ref. 1; BAE01441." evidence="4" ref="1">
    <original>K</original>
    <variation>R</variation>
    <location>
        <position position="458"/>
    </location>
</feature>
<feature type="sequence conflict" description="In Ref. 1; BAE01441." evidence="4" ref="1">
    <original>M</original>
    <variation>I</variation>
    <location>
        <position position="565"/>
    </location>
</feature>
<feature type="sequence conflict" description="In Ref. 1; BAE01441." evidence="4" ref="1">
    <original>P</original>
    <variation>PLP</variation>
    <location>
        <position position="633"/>
    </location>
</feature>
<dbReference type="EMBL" id="AB169356">
    <property type="protein sequence ID" value="BAE01441.1"/>
    <property type="status" value="ALT_SEQ"/>
    <property type="molecule type" value="mRNA"/>
</dbReference>
<dbReference type="EMBL" id="AB179208">
    <property type="protein sequence ID" value="BAE02259.1"/>
    <property type="status" value="ALT_INIT"/>
    <property type="molecule type" value="mRNA"/>
</dbReference>
<dbReference type="SMR" id="Q4R3Q7"/>
<dbReference type="STRING" id="9541.ENSMFAP00000010581"/>
<dbReference type="eggNOG" id="ENOG502QQSE">
    <property type="taxonomic scope" value="Eukaryota"/>
</dbReference>
<dbReference type="Proteomes" id="UP000233100">
    <property type="component" value="Unplaced"/>
</dbReference>
<dbReference type="GO" id="GO:0005930">
    <property type="term" value="C:axoneme"/>
    <property type="evidence" value="ECO:0007669"/>
    <property type="project" value="TreeGrafter"/>
</dbReference>
<dbReference type="GO" id="GO:0042073">
    <property type="term" value="P:intraciliary transport"/>
    <property type="evidence" value="ECO:0007669"/>
    <property type="project" value="TreeGrafter"/>
</dbReference>
<dbReference type="InterPro" id="IPR026188">
    <property type="entry name" value="Lebercilin-like"/>
</dbReference>
<dbReference type="InterPro" id="IPR028933">
    <property type="entry name" value="Lebercilin_dom"/>
</dbReference>
<dbReference type="PANTHER" id="PTHR16650">
    <property type="entry name" value="C21ORF13-RELATED"/>
    <property type="match status" value="1"/>
</dbReference>
<dbReference type="PANTHER" id="PTHR16650:SF9">
    <property type="entry name" value="LEBERCILIN-LIKE PROTEIN"/>
    <property type="match status" value="1"/>
</dbReference>
<dbReference type="Pfam" id="PF15619">
    <property type="entry name" value="Lebercilin"/>
    <property type="match status" value="1"/>
</dbReference>
<sequence length="668" mass="76282">MSLADLTKTNVDEQFSSVALENNRRSAECKRSPGTGDFSRNSSASAKSVDYSRSQCSCGSLSSQYDYSEDFLCDCSEKAINRNYLKQPVVKEKEKKKYNVSKISQSKGQKEISVEKKHTWNASLFNSQIHMIAQRRDAMAHRILSARLHKIKGLKNELADMHHKLEAILTENQFLKQLQLRHLKAIGKYENSQNNLPQIMAKHQNEVKNLRQLLRKSQEKERTVSRKLRETDSQLLKTKDTLQALQKLSEDKNLAEREELTHKLSIITTKMEANDKKIQSLEKQLRLNSRVFSRQLAIETRKTLAAQTATKTLQVEVKHLQQKLKEKDRELEIKNIYSHRILKNLHDTEDYPKVSSTKSVQADRKSLPFTSMRHQGTQKSDVPPLTTKGKKATGNMNHKEKSTEINREIPHCVNKLPKQEDSKTKYEDLSREEKHLEVQVLLENTGRQKDKKEDQEKKTIFVKEEQELPPKIIEVIHPERESTQEDVLVREKFKRSMQRNGMDDTPDKCTAPYTKGPLRQRRHYSFTEATENLHHGLPASGGPANAGNTKYSHSTSKHLSNREEMELEHSDSGYEPSFGKSSRIKVKDTTFRDKKSSLMEELFGSGYVLKTDQSSPGVAKGSEEPLQSKESHPPSQASASNAFGDSKVTVVNSIKPSSPTEGKRKIII</sequence>
<comment type="similarity">
    <text evidence="4">Belongs to the LCA5 family.</text>
</comment>
<comment type="sequence caution" evidence="4">
    <conflict type="frameshift">
        <sequence resource="EMBL-CDS" id="BAE01441"/>
    </conflict>
</comment>
<comment type="sequence caution" evidence="4">
    <conflict type="miscellaneous discrepancy">
        <sequence resource="EMBL-CDS" id="BAE01441"/>
    </conflict>
    <text>Contaminating sequence. Potential poly-A sequence.</text>
</comment>
<comment type="sequence caution" evidence="4">
    <conflict type="erroneous initiation">
        <sequence resource="EMBL-CDS" id="BAE02259"/>
    </conflict>
</comment>
<evidence type="ECO:0000250" key="1">
    <source>
        <dbReference type="UniProtKB" id="O95447"/>
    </source>
</evidence>
<evidence type="ECO:0000255" key="2"/>
<evidence type="ECO:0000256" key="3">
    <source>
        <dbReference type="SAM" id="MobiDB-lite"/>
    </source>
</evidence>
<evidence type="ECO:0000305" key="4"/>
<evidence type="ECO:0000312" key="5">
    <source>
        <dbReference type="EMBL" id="BAE02259.1"/>
    </source>
</evidence>
<proteinExistence type="evidence at transcript level"/>
<gene>
    <name evidence="1" type="primary">LCA5L</name>
    <name type="ORF">QtsA-14985</name>
    <name type="ORF">QtsA-19247</name>
</gene>
<organism>
    <name type="scientific">Macaca fascicularis</name>
    <name type="common">Crab-eating macaque</name>
    <name type="synonym">Cynomolgus monkey</name>
    <dbReference type="NCBI Taxonomy" id="9541"/>
    <lineage>
        <taxon>Eukaryota</taxon>
        <taxon>Metazoa</taxon>
        <taxon>Chordata</taxon>
        <taxon>Craniata</taxon>
        <taxon>Vertebrata</taxon>
        <taxon>Euteleostomi</taxon>
        <taxon>Mammalia</taxon>
        <taxon>Eutheria</taxon>
        <taxon>Euarchontoglires</taxon>
        <taxon>Primates</taxon>
        <taxon>Haplorrhini</taxon>
        <taxon>Catarrhini</taxon>
        <taxon>Cercopithecidae</taxon>
        <taxon>Cercopithecinae</taxon>
        <taxon>Macaca</taxon>
    </lineage>
</organism>
<reference evidence="5" key="1">
    <citation type="submission" date="2005-06" db="EMBL/GenBank/DDBJ databases">
        <title>DNA sequences of macaque genes expressed in brain or testis and its evolutionary implications.</title>
        <authorList>
            <consortium name="International consortium for macaque cDNA sequencing and analysis"/>
        </authorList>
    </citation>
    <scope>NUCLEOTIDE SEQUENCE [LARGE SCALE MRNA]</scope>
    <source>
        <tissue evidence="5">Testis</tissue>
    </source>
</reference>
<protein>
    <recommendedName>
        <fullName>Lebercilin-like protein</fullName>
    </recommendedName>
    <alternativeName>
        <fullName>Leber congenital amaurosis 5-like protein</fullName>
    </alternativeName>
</protein>
<name>LCA5L_MACFA</name>
<accession>Q4R3Q7</accession>
<accession>Q4R634</accession>